<proteinExistence type="inferred from homology"/>
<reference key="1">
    <citation type="submission" date="2006-12" db="EMBL/GenBank/DDBJ databases">
        <title>Complete sequence of chromosome of Mycobacterium sp. KMS.</title>
        <authorList>
            <consortium name="US DOE Joint Genome Institute"/>
            <person name="Copeland A."/>
            <person name="Lucas S."/>
            <person name="Lapidus A."/>
            <person name="Barry K."/>
            <person name="Detter J.C."/>
            <person name="Glavina del Rio T."/>
            <person name="Hammon N."/>
            <person name="Israni S."/>
            <person name="Dalin E."/>
            <person name="Tice H."/>
            <person name="Pitluck S."/>
            <person name="Kiss H."/>
            <person name="Brettin T."/>
            <person name="Bruce D."/>
            <person name="Han C."/>
            <person name="Tapia R."/>
            <person name="Gilna P."/>
            <person name="Schmutz J."/>
            <person name="Larimer F."/>
            <person name="Land M."/>
            <person name="Hauser L."/>
            <person name="Kyrpides N."/>
            <person name="Mikhailova N."/>
            <person name="Miller C.D."/>
            <person name="Richardson P."/>
        </authorList>
    </citation>
    <scope>NUCLEOTIDE SEQUENCE [LARGE SCALE GENOMIC DNA]</scope>
    <source>
        <strain>KMS</strain>
    </source>
</reference>
<organism>
    <name type="scientific">Mycobacterium sp. (strain KMS)</name>
    <dbReference type="NCBI Taxonomy" id="189918"/>
    <lineage>
        <taxon>Bacteria</taxon>
        <taxon>Bacillati</taxon>
        <taxon>Actinomycetota</taxon>
        <taxon>Actinomycetes</taxon>
        <taxon>Mycobacteriales</taxon>
        <taxon>Mycobacteriaceae</taxon>
        <taxon>Mycobacterium</taxon>
    </lineage>
</organism>
<gene>
    <name type="primary">atpFH</name>
    <name type="synonym">atpF</name>
    <name type="synonym">atpH</name>
    <name type="ordered locus">Mkms_3953</name>
</gene>
<sequence length="443" mass="48270">MSTFIGQLIGFAVIVFLLVRFVVPPVRRMMTAQQETVRRQLEESSTAANKVAQADQQHAKAVEEAKADARRVVDEARSDAEKIAEQMRAQADAEVERIKVQGQAQVQLLRQQLIRELRSHLGTESVARARELVRDHVSDDDNRSATVDRFLDELDAMAPSDAALDDAVGSRMRSTSRESLKALVSRFDELTADVDADGLTSLGDELAAVAKLLKTEPVLGKHFGEPTEDGEGKANLAEAVLSGKISDTALEVVKAAVAQRWSDESDLDYAVRHTARLALLVRAERNDETSEVEDQLFRFSRILDSESRLSGVLSDYTTPVDGRIGLLDRLLGDQAGETTRALLAQTVELLRGERADEAVRELAELAVARRGEVVAHVNAAAELSDAQRTRLAEVLGRIYGRPASLQLHIDPDMLGGLTIAVGDEVIDGSLASRLASAETQLPD</sequence>
<name>ATPFD_MYCSK</name>
<accession>A1UJY7</accession>
<protein>
    <recommendedName>
        <fullName>ATP synthase subunit b-delta</fullName>
    </recommendedName>
    <domain>
        <recommendedName>
            <fullName>ATP synthase subunit b</fullName>
        </recommendedName>
        <alternativeName>
            <fullName>ATP synthase F(0) sector subunit b 2</fullName>
        </alternativeName>
        <alternativeName>
            <fullName>ATPase subunit I 2</fullName>
        </alternativeName>
        <alternativeName>
            <fullName>F-type ATPase subunit b 2</fullName>
            <shortName>F-ATPase subunit b 2</shortName>
        </alternativeName>
    </domain>
    <domain>
        <recommendedName>
            <fullName>ATP synthase subunit delta</fullName>
        </recommendedName>
        <alternativeName>
            <fullName>ATP synthase F(1) sector subunit delta</fullName>
        </alternativeName>
        <alternativeName>
            <fullName>F-type ATPase subunit delta</fullName>
            <shortName>F-ATPase subunit delta</shortName>
        </alternativeName>
    </domain>
</protein>
<keyword id="KW-0066">ATP synthesis</keyword>
<keyword id="KW-1003">Cell membrane</keyword>
<keyword id="KW-0138">CF(0)</keyword>
<keyword id="KW-0375">Hydrogen ion transport</keyword>
<keyword id="KW-0406">Ion transport</keyword>
<keyword id="KW-0472">Membrane</keyword>
<keyword id="KW-0511">Multifunctional enzyme</keyword>
<keyword id="KW-0812">Transmembrane</keyword>
<keyword id="KW-1133">Transmembrane helix</keyword>
<keyword id="KW-0813">Transport</keyword>
<feature type="chain" id="PRO_0000368894" description="ATP synthase subunit b-delta">
    <location>
        <begin position="1"/>
        <end position="443"/>
    </location>
</feature>
<feature type="transmembrane region" description="Helical" evidence="2">
    <location>
        <begin position="4"/>
        <end position="24"/>
    </location>
</feature>
<feature type="region of interest" description="ATP synthase subunit b">
    <location>
        <begin position="1"/>
        <end position="168"/>
    </location>
</feature>
<feature type="region of interest" description="ATP synthase subunit delta">
    <location>
        <begin position="169"/>
        <end position="443"/>
    </location>
</feature>
<comment type="function">
    <text evidence="1">F(1)F(0) ATP synthase produces ATP from ADP in the presence of a proton or sodium gradient. F-type ATPases consist of two structural domains, F(1) containing the extramembraneous catalytic core and F(0) containing the membrane proton channel, linked together by a central stalk and a peripheral stalk. During catalysis, ATP synthesis in the catalytic domain of F(1) is coupled via a rotary mechanism of the central stalk subunits to proton translocation (By similarity).</text>
</comment>
<comment type="function">
    <text evidence="1">This fusion protein includes a component of the F(0) channel (subunit b) and of the F(1) subunit (subunit delta). Two copies of subunit b and one of delta together form the peripheral 'stator' stalk which links F(1) to F(0) (By similarity).</text>
</comment>
<comment type="subunit">
    <text evidence="1">F-type ATPases have 2 components, F(1) - the catalytic core - and F(0) - the membrane proton channel. F(1) has five subunits: alpha(3), beta(3), gamma(1), delta(1), epsilon(1). F(0) has three main subunits: a(1), b(2) and c(10-14). The alpha and beta chains form an alternating ring which encloses part of the gamma chain. F(1) is attached to F(0) by a central stalk formed by the gamma and epsilon chains, while a peripheral stalk is formed by the delta and b chains (By similarity).</text>
</comment>
<comment type="subcellular location">
    <subcellularLocation>
        <location evidence="1">Cell membrane</location>
        <topology evidence="1">Single-pass membrane protein</topology>
    </subcellularLocation>
</comment>
<comment type="similarity">
    <text evidence="3">In the N-terminal section; belongs to the ATPase B chain family.</text>
</comment>
<comment type="similarity">
    <text evidence="3">In the C-terminal section; belongs to the ATPase delta chain family.</text>
</comment>
<dbReference type="EMBL" id="CP000518">
    <property type="protein sequence ID" value="ABL93145.1"/>
    <property type="molecule type" value="Genomic_DNA"/>
</dbReference>
<dbReference type="SMR" id="A1UJY7"/>
<dbReference type="STRING" id="189918.Mkms_3953"/>
<dbReference type="KEGG" id="mkm:Mkms_3953"/>
<dbReference type="HOGENOM" id="CLU_722652_0_0_11"/>
<dbReference type="OrthoDB" id="5242917at2"/>
<dbReference type="GO" id="GO:0005886">
    <property type="term" value="C:plasma membrane"/>
    <property type="evidence" value="ECO:0007669"/>
    <property type="project" value="UniProtKB-SubCell"/>
</dbReference>
<dbReference type="GO" id="GO:0045259">
    <property type="term" value="C:proton-transporting ATP synthase complex"/>
    <property type="evidence" value="ECO:0007669"/>
    <property type="project" value="UniProtKB-KW"/>
</dbReference>
<dbReference type="GO" id="GO:0046933">
    <property type="term" value="F:proton-transporting ATP synthase activity, rotational mechanism"/>
    <property type="evidence" value="ECO:0007669"/>
    <property type="project" value="UniProtKB-UniRule"/>
</dbReference>
<dbReference type="CDD" id="cd06503">
    <property type="entry name" value="ATP-synt_Fo_b"/>
    <property type="match status" value="1"/>
</dbReference>
<dbReference type="Gene3D" id="1.20.5.620">
    <property type="entry name" value="F1F0 ATP synthase subunit B, membrane domain"/>
    <property type="match status" value="1"/>
</dbReference>
<dbReference type="HAMAP" id="MF_01398">
    <property type="entry name" value="ATP_synth_b_bprime"/>
    <property type="match status" value="1"/>
</dbReference>
<dbReference type="HAMAP" id="MF_01416">
    <property type="entry name" value="ATP_synth_delta_bact"/>
    <property type="match status" value="1"/>
</dbReference>
<dbReference type="InterPro" id="IPR028987">
    <property type="entry name" value="ATP_synth_B-like_membr_sf"/>
</dbReference>
<dbReference type="InterPro" id="IPR002146">
    <property type="entry name" value="ATP_synth_b/b'su_bac/chlpt"/>
</dbReference>
<dbReference type="InterPro" id="IPR005864">
    <property type="entry name" value="ATP_synth_F0_bsu_bac"/>
</dbReference>
<dbReference type="InterPro" id="IPR000711">
    <property type="entry name" value="ATPase_OSCP/dsu"/>
</dbReference>
<dbReference type="NCBIfam" id="TIGR01144">
    <property type="entry name" value="ATP_synt_b"/>
    <property type="match status" value="1"/>
</dbReference>
<dbReference type="NCBIfam" id="TIGR01145">
    <property type="entry name" value="ATP_synt_delta"/>
    <property type="match status" value="1"/>
</dbReference>
<dbReference type="NCBIfam" id="NF009961">
    <property type="entry name" value="PRK13428.1"/>
    <property type="match status" value="1"/>
</dbReference>
<dbReference type="NCBIfam" id="NF009967">
    <property type="entry name" value="PRK13430.1"/>
    <property type="match status" value="1"/>
</dbReference>
<dbReference type="PANTHER" id="PTHR11910">
    <property type="entry name" value="ATP SYNTHASE DELTA CHAIN"/>
    <property type="match status" value="1"/>
</dbReference>
<dbReference type="Pfam" id="PF00430">
    <property type="entry name" value="ATP-synt_B"/>
    <property type="match status" value="1"/>
</dbReference>
<dbReference type="Pfam" id="PF00213">
    <property type="entry name" value="OSCP"/>
    <property type="match status" value="1"/>
</dbReference>
<dbReference type="PRINTS" id="PR00125">
    <property type="entry name" value="ATPASEDELTA"/>
</dbReference>
<dbReference type="SUPFAM" id="SSF81573">
    <property type="entry name" value="F1F0 ATP synthase subunit B, membrane domain"/>
    <property type="match status" value="1"/>
</dbReference>
<evidence type="ECO:0000250" key="1"/>
<evidence type="ECO:0000255" key="2"/>
<evidence type="ECO:0000305" key="3"/>